<comment type="function">
    <text evidence="1">Promotes RNA polymerase assembly. Latches the N- and C-terminal regions of the beta' subunit thereby facilitating its interaction with the beta and alpha subunits.</text>
</comment>
<comment type="catalytic activity">
    <reaction evidence="1">
        <text>RNA(n) + a ribonucleoside 5'-triphosphate = RNA(n+1) + diphosphate</text>
        <dbReference type="Rhea" id="RHEA:21248"/>
        <dbReference type="Rhea" id="RHEA-COMP:14527"/>
        <dbReference type="Rhea" id="RHEA-COMP:17342"/>
        <dbReference type="ChEBI" id="CHEBI:33019"/>
        <dbReference type="ChEBI" id="CHEBI:61557"/>
        <dbReference type="ChEBI" id="CHEBI:140395"/>
        <dbReference type="EC" id="2.7.7.6"/>
    </reaction>
</comment>
<comment type="subunit">
    <text evidence="1">The RNAP catalytic core consists of 2 alpha, 1 beta, 1 beta' and 1 omega subunit. When a sigma factor is associated with the core the holoenzyme is formed, which can initiate transcription.</text>
</comment>
<comment type="similarity">
    <text evidence="1">Belongs to the RNA polymerase subunit omega family.</text>
</comment>
<dbReference type="EC" id="2.7.7.6" evidence="1"/>
<dbReference type="EMBL" id="CP000605">
    <property type="protein sequence ID" value="ACD99409.1"/>
    <property type="molecule type" value="Genomic_DNA"/>
</dbReference>
<dbReference type="RefSeq" id="WP_007053158.1">
    <property type="nucleotide sequence ID" value="NZ_AABM02000004.1"/>
</dbReference>
<dbReference type="SMR" id="B3DRM7"/>
<dbReference type="GeneID" id="69578696"/>
<dbReference type="KEGG" id="blj:BLD_1964"/>
<dbReference type="HOGENOM" id="CLU_125406_1_1_11"/>
<dbReference type="Proteomes" id="UP000002419">
    <property type="component" value="Chromosome"/>
</dbReference>
<dbReference type="GO" id="GO:0000428">
    <property type="term" value="C:DNA-directed RNA polymerase complex"/>
    <property type="evidence" value="ECO:0007669"/>
    <property type="project" value="UniProtKB-KW"/>
</dbReference>
<dbReference type="GO" id="GO:0003677">
    <property type="term" value="F:DNA binding"/>
    <property type="evidence" value="ECO:0007669"/>
    <property type="project" value="UniProtKB-UniRule"/>
</dbReference>
<dbReference type="GO" id="GO:0003899">
    <property type="term" value="F:DNA-directed RNA polymerase activity"/>
    <property type="evidence" value="ECO:0007669"/>
    <property type="project" value="UniProtKB-UniRule"/>
</dbReference>
<dbReference type="GO" id="GO:0006351">
    <property type="term" value="P:DNA-templated transcription"/>
    <property type="evidence" value="ECO:0007669"/>
    <property type="project" value="UniProtKB-UniRule"/>
</dbReference>
<dbReference type="Gene3D" id="3.90.940.10">
    <property type="match status" value="1"/>
</dbReference>
<dbReference type="HAMAP" id="MF_00366">
    <property type="entry name" value="RNApol_bact_RpoZ"/>
    <property type="match status" value="1"/>
</dbReference>
<dbReference type="InterPro" id="IPR003716">
    <property type="entry name" value="DNA-dir_RNA_pol_omega"/>
</dbReference>
<dbReference type="InterPro" id="IPR006110">
    <property type="entry name" value="Pol_omega/Rpo6/RPB6"/>
</dbReference>
<dbReference type="InterPro" id="IPR036161">
    <property type="entry name" value="RPB6/omega-like_sf"/>
</dbReference>
<dbReference type="NCBIfam" id="TIGR00690">
    <property type="entry name" value="rpoZ"/>
    <property type="match status" value="1"/>
</dbReference>
<dbReference type="PANTHER" id="PTHR34476">
    <property type="entry name" value="DNA-DIRECTED RNA POLYMERASE SUBUNIT OMEGA"/>
    <property type="match status" value="1"/>
</dbReference>
<dbReference type="PANTHER" id="PTHR34476:SF1">
    <property type="entry name" value="DNA-DIRECTED RNA POLYMERASE SUBUNIT OMEGA"/>
    <property type="match status" value="1"/>
</dbReference>
<dbReference type="Pfam" id="PF01192">
    <property type="entry name" value="RNA_pol_Rpb6"/>
    <property type="match status" value="1"/>
</dbReference>
<dbReference type="SMART" id="SM01409">
    <property type="entry name" value="RNA_pol_Rpb6"/>
    <property type="match status" value="1"/>
</dbReference>
<dbReference type="SUPFAM" id="SSF63562">
    <property type="entry name" value="RPB6/omega subunit-like"/>
    <property type="match status" value="1"/>
</dbReference>
<keyword id="KW-0240">DNA-directed RNA polymerase</keyword>
<keyword id="KW-0548">Nucleotidyltransferase</keyword>
<keyword id="KW-0804">Transcription</keyword>
<keyword id="KW-0808">Transferase</keyword>
<sequence length="94" mass="10366">MAFGTDPTPDGLANPPIDDLMKHADSKYALAIFAAKRARQINSYFTQLNEGLLQNIGPLVEYQNNEKPLSIAFREIDEGLLEETLGEDDANEGN</sequence>
<gene>
    <name evidence="1" type="primary">rpoZ</name>
    <name type="ordered locus">BLD_1964</name>
</gene>
<protein>
    <recommendedName>
        <fullName evidence="1">DNA-directed RNA polymerase subunit omega</fullName>
        <shortName evidence="1">RNAP omega subunit</shortName>
        <ecNumber evidence="1">2.7.7.6</ecNumber>
    </recommendedName>
    <alternativeName>
        <fullName evidence="1">RNA polymerase omega subunit</fullName>
    </alternativeName>
    <alternativeName>
        <fullName evidence="1">Transcriptase subunit omega</fullName>
    </alternativeName>
</protein>
<name>RPOZ_BIFLD</name>
<accession>B3DRM7</accession>
<reference key="1">
    <citation type="journal article" date="2008" name="BMC Genomics">
        <title>Comparative genomic analysis of the gut bacterium Bifidobacterium longum reveals loci susceptible to deletion during pure culture growth.</title>
        <authorList>
            <person name="Lee J.H."/>
            <person name="Karamychev V.N."/>
            <person name="Kozyavkin S.A."/>
            <person name="Mills D."/>
            <person name="Pavlov A.R."/>
            <person name="Pavlova N.V."/>
            <person name="Polouchine N.N."/>
            <person name="Richardson P.M."/>
            <person name="Shakhova V.V."/>
            <person name="Slesarev A.I."/>
            <person name="Weimer B."/>
            <person name="O'Sullivan D.J."/>
        </authorList>
    </citation>
    <scope>NUCLEOTIDE SEQUENCE [LARGE SCALE GENOMIC DNA]</scope>
    <source>
        <strain>DJO10A</strain>
    </source>
</reference>
<organism>
    <name type="scientific">Bifidobacterium longum (strain DJO10A)</name>
    <dbReference type="NCBI Taxonomy" id="205913"/>
    <lineage>
        <taxon>Bacteria</taxon>
        <taxon>Bacillati</taxon>
        <taxon>Actinomycetota</taxon>
        <taxon>Actinomycetes</taxon>
        <taxon>Bifidobacteriales</taxon>
        <taxon>Bifidobacteriaceae</taxon>
        <taxon>Bifidobacterium</taxon>
    </lineage>
</organism>
<feature type="chain" id="PRO_1000121192" description="DNA-directed RNA polymerase subunit omega">
    <location>
        <begin position="1"/>
        <end position="94"/>
    </location>
</feature>
<evidence type="ECO:0000255" key="1">
    <source>
        <dbReference type="HAMAP-Rule" id="MF_00366"/>
    </source>
</evidence>
<proteinExistence type="inferred from homology"/>